<keyword id="KW-0507">mRNA processing</keyword>
<keyword id="KW-0508">mRNA splicing</keyword>
<keyword id="KW-0539">Nucleus</keyword>
<keyword id="KW-1185">Reference proteome</keyword>
<keyword id="KW-0687">Ribonucleoprotein</keyword>
<keyword id="KW-0694">RNA-binding</keyword>
<keyword id="KW-0747">Spliceosome</keyword>
<name>PRP8B_ARATH</name>
<organism>
    <name type="scientific">Arabidopsis thaliana</name>
    <name type="common">Mouse-ear cress</name>
    <dbReference type="NCBI Taxonomy" id="3702"/>
    <lineage>
        <taxon>Eukaryota</taxon>
        <taxon>Viridiplantae</taxon>
        <taxon>Streptophyta</taxon>
        <taxon>Embryophyta</taxon>
        <taxon>Tracheophyta</taxon>
        <taxon>Spermatophyta</taxon>
        <taxon>Magnoliopsida</taxon>
        <taxon>eudicotyledons</taxon>
        <taxon>Gunneridae</taxon>
        <taxon>Pentapetalae</taxon>
        <taxon>rosids</taxon>
        <taxon>malvids</taxon>
        <taxon>Brassicales</taxon>
        <taxon>Brassicaceae</taxon>
        <taxon>Camelineae</taxon>
        <taxon>Arabidopsis</taxon>
    </lineage>
</organism>
<reference key="1">
    <citation type="journal article" date="1999" name="Nature">
        <title>Sequence and analysis of chromosome 4 of the plant Arabidopsis thaliana.</title>
        <authorList>
            <person name="Mayer K.F.X."/>
            <person name="Schueller C."/>
            <person name="Wambutt R."/>
            <person name="Murphy G."/>
            <person name="Volckaert G."/>
            <person name="Pohl T."/>
            <person name="Duesterhoeft A."/>
            <person name="Stiekema W."/>
            <person name="Entian K.-D."/>
            <person name="Terryn N."/>
            <person name="Harris B."/>
            <person name="Ansorge W."/>
            <person name="Brandt P."/>
            <person name="Grivell L.A."/>
            <person name="Rieger M."/>
            <person name="Weichselgartner M."/>
            <person name="de Simone V."/>
            <person name="Obermaier B."/>
            <person name="Mache R."/>
            <person name="Mueller M."/>
            <person name="Kreis M."/>
            <person name="Delseny M."/>
            <person name="Puigdomenech P."/>
            <person name="Watson M."/>
            <person name="Schmidtheini T."/>
            <person name="Reichert B."/>
            <person name="Portetelle D."/>
            <person name="Perez-Alonso M."/>
            <person name="Boutry M."/>
            <person name="Bancroft I."/>
            <person name="Vos P."/>
            <person name="Hoheisel J."/>
            <person name="Zimmermann W."/>
            <person name="Wedler H."/>
            <person name="Ridley P."/>
            <person name="Langham S.-A."/>
            <person name="McCullagh B."/>
            <person name="Bilham L."/>
            <person name="Robben J."/>
            <person name="van der Schueren J."/>
            <person name="Grymonprez B."/>
            <person name="Chuang Y.-J."/>
            <person name="Vandenbussche F."/>
            <person name="Braeken M."/>
            <person name="Weltjens I."/>
            <person name="Voet M."/>
            <person name="Bastiaens I."/>
            <person name="Aert R."/>
            <person name="Defoor E."/>
            <person name="Weitzenegger T."/>
            <person name="Bothe G."/>
            <person name="Ramsperger U."/>
            <person name="Hilbert H."/>
            <person name="Braun M."/>
            <person name="Holzer E."/>
            <person name="Brandt A."/>
            <person name="Peters S."/>
            <person name="van Staveren M."/>
            <person name="Dirkse W."/>
            <person name="Mooijman P."/>
            <person name="Klein Lankhorst R."/>
            <person name="Rose M."/>
            <person name="Hauf J."/>
            <person name="Koetter P."/>
            <person name="Berneiser S."/>
            <person name="Hempel S."/>
            <person name="Feldpausch M."/>
            <person name="Lamberth S."/>
            <person name="Van den Daele H."/>
            <person name="De Keyser A."/>
            <person name="Buysshaert C."/>
            <person name="Gielen J."/>
            <person name="Villarroel R."/>
            <person name="De Clercq R."/>
            <person name="van Montagu M."/>
            <person name="Rogers J."/>
            <person name="Cronin A."/>
            <person name="Quail M.A."/>
            <person name="Bray-Allen S."/>
            <person name="Clark L."/>
            <person name="Doggett J."/>
            <person name="Hall S."/>
            <person name="Kay M."/>
            <person name="Lennard N."/>
            <person name="McLay K."/>
            <person name="Mayes R."/>
            <person name="Pettett A."/>
            <person name="Rajandream M.A."/>
            <person name="Lyne M."/>
            <person name="Benes V."/>
            <person name="Rechmann S."/>
            <person name="Borkova D."/>
            <person name="Bloecker H."/>
            <person name="Scharfe M."/>
            <person name="Grimm M."/>
            <person name="Loehnert T.-H."/>
            <person name="Dose S."/>
            <person name="de Haan M."/>
            <person name="Maarse A.C."/>
            <person name="Schaefer M."/>
            <person name="Mueller-Auer S."/>
            <person name="Gabel C."/>
            <person name="Fuchs M."/>
            <person name="Fartmann B."/>
            <person name="Granderath K."/>
            <person name="Dauner D."/>
            <person name="Herzl A."/>
            <person name="Neumann S."/>
            <person name="Argiriou A."/>
            <person name="Vitale D."/>
            <person name="Liguori R."/>
            <person name="Piravandi E."/>
            <person name="Massenet O."/>
            <person name="Quigley F."/>
            <person name="Clabauld G."/>
            <person name="Muendlein A."/>
            <person name="Felber R."/>
            <person name="Schnabl S."/>
            <person name="Hiller R."/>
            <person name="Schmidt W."/>
            <person name="Lecharny A."/>
            <person name="Aubourg S."/>
            <person name="Chefdor F."/>
            <person name="Cooke R."/>
            <person name="Berger C."/>
            <person name="Monfort A."/>
            <person name="Casacuberta E."/>
            <person name="Gibbons T."/>
            <person name="Weber N."/>
            <person name="Vandenbol M."/>
            <person name="Bargues M."/>
            <person name="Terol J."/>
            <person name="Torres A."/>
            <person name="Perez-Perez A."/>
            <person name="Purnelle B."/>
            <person name="Bent E."/>
            <person name="Johnson S."/>
            <person name="Tacon D."/>
            <person name="Jesse T."/>
            <person name="Heijnen L."/>
            <person name="Schwarz S."/>
            <person name="Scholler P."/>
            <person name="Heber S."/>
            <person name="Francs P."/>
            <person name="Bielke C."/>
            <person name="Frishman D."/>
            <person name="Haase D."/>
            <person name="Lemcke K."/>
            <person name="Mewes H.-W."/>
            <person name="Stocker S."/>
            <person name="Zaccaria P."/>
            <person name="Bevan M."/>
            <person name="Wilson R.K."/>
            <person name="de la Bastide M."/>
            <person name="Habermann K."/>
            <person name="Parnell L."/>
            <person name="Dedhia N."/>
            <person name="Gnoj L."/>
            <person name="Schutz K."/>
            <person name="Huang E."/>
            <person name="Spiegel L."/>
            <person name="Sekhon M."/>
            <person name="Murray J."/>
            <person name="Sheet P."/>
            <person name="Cordes M."/>
            <person name="Abu-Threideh J."/>
            <person name="Stoneking T."/>
            <person name="Kalicki J."/>
            <person name="Graves T."/>
            <person name="Harmon G."/>
            <person name="Edwards J."/>
            <person name="Latreille P."/>
            <person name="Courtney L."/>
            <person name="Cloud J."/>
            <person name="Abbott A."/>
            <person name="Scott K."/>
            <person name="Johnson D."/>
            <person name="Minx P."/>
            <person name="Bentley D."/>
            <person name="Fulton B."/>
            <person name="Miller N."/>
            <person name="Greco T."/>
            <person name="Kemp K."/>
            <person name="Kramer J."/>
            <person name="Fulton L."/>
            <person name="Mardis E."/>
            <person name="Dante M."/>
            <person name="Pepin K."/>
            <person name="Hillier L.W."/>
            <person name="Nelson J."/>
            <person name="Spieth J."/>
            <person name="Ryan E."/>
            <person name="Andrews S."/>
            <person name="Geisel C."/>
            <person name="Layman D."/>
            <person name="Du H."/>
            <person name="Ali J."/>
            <person name="Berghoff A."/>
            <person name="Jones K."/>
            <person name="Drone K."/>
            <person name="Cotton M."/>
            <person name="Joshu C."/>
            <person name="Antonoiu B."/>
            <person name="Zidanic M."/>
            <person name="Strong C."/>
            <person name="Sun H."/>
            <person name="Lamar B."/>
            <person name="Yordan C."/>
            <person name="Ma P."/>
            <person name="Zhong J."/>
            <person name="Preston R."/>
            <person name="Vil D."/>
            <person name="Shekher M."/>
            <person name="Matero A."/>
            <person name="Shah R."/>
            <person name="Swaby I.K."/>
            <person name="O'Shaughnessy A."/>
            <person name="Rodriguez M."/>
            <person name="Hoffman J."/>
            <person name="Till S."/>
            <person name="Granat S."/>
            <person name="Shohdy N."/>
            <person name="Hasegawa A."/>
            <person name="Hameed A."/>
            <person name="Lodhi M."/>
            <person name="Johnson A."/>
            <person name="Chen E."/>
            <person name="Marra M.A."/>
            <person name="Martienssen R."/>
            <person name="McCombie W.R."/>
        </authorList>
    </citation>
    <scope>NUCLEOTIDE SEQUENCE [LARGE SCALE GENOMIC DNA]</scope>
    <source>
        <strain>cv. Columbia</strain>
    </source>
</reference>
<reference key="2">
    <citation type="journal article" date="2017" name="Plant J.">
        <title>Araport11: a complete reannotation of the Arabidopsis thaliana reference genome.</title>
        <authorList>
            <person name="Cheng C.Y."/>
            <person name="Krishnakumar V."/>
            <person name="Chan A.P."/>
            <person name="Thibaud-Nissen F."/>
            <person name="Schobel S."/>
            <person name="Town C.D."/>
        </authorList>
    </citation>
    <scope>GENOME REANNOTATION</scope>
    <source>
        <strain>cv. Columbia</strain>
    </source>
</reference>
<sequence>MWNIDGTSLAPPGTDGSRMQTPSHPADHPSYTAPSNRNTPTVPTPEDAEAKLEKKARTWMQLNSKRYGDKRKFGFVETQKEDMPPEHVRKIIRDHGDMSSKKHRLDKRVYLGALKFVPHAVFKLLENMPMPWEQVRDVKVLYHITGAITFVNEVRWVVEPIYMAQWGSMWIMMRREKRDRRHFKRMRFPPFDDEEPPLDYADNLLDVDPLEAIQLELDEEEDSAVYSWFYDHKPLVKTKMINGPSYQTWNLSLPIMSTLHRLAAQLLSDLVDRNYFYLFDMPSFFTAKALNMCIPGGPKFEPLHRDMEKGDEDWNEFNDINKLIIRSPLRTEYKVAFPHLYNNRPRKVKLCVYHTPMVMYIKTEDPDLPAFYYDPLIHPISNSNNTNKEQRKSNGYDDDGDDFVLPEGLEPLLNNSPLYTDTTAPGISLLFAPRPFNMRSGRTRRAEDIPLVAEWFKEHCPPAYPVKVRVSYQKLLKCYLLNELHHRPPKAQKKKHLFRSLAATKFFQSTELDWVEVGLQVCRQGYNMLNLLIHRKNLNYLHLDYNFNLKPVKTLTTKERKKSRFGNAFHLCREILRLTKLVVDANVQFRLGNVDAFQLADGLQYIFSHVGQLTGMYRYKYRLMRQIRMCKDLKHLIYYRFNTGPVGKGPGCGFWAPMWRVWLFFLRGIVPLLERWLGNLLARQFEGRHSKGVAKTVTKQRVESHFDLELRAAVMHDVVDAMPEGIKQNKARTILQHLSEAWRCWKANIPWKVPGLPVAIENMILRYVKSKADWWTNVAHYNRERIRRGATVDKTVCRKNLGRLTRLWLKAEQERQHNFQKDGPYVTADEGIAIYSTTVNWLESRKFSAIPFPPLSYKHDTKLLILALERLKESYSAAVKLNQQQREELGLIEQAYDNPHEALMRIKRHLLTQHSFKEVGIEFMDLYSHLIPVYQIDPLEKITDAYLDQYLWYEGDKRHLFPNWIKPADSEPPPLLVYKWCQGINNLQGIWDTSDGQCVVMLQTKFEKLFEKIDLTVLNSLLRLVLDPKLANYVTGKNNVVLSYKDMSYTNTYGLIRGLQFASFVVQFYGLVLDLLLLGLTRASEIAGPPQRPNEFMTYWDTKVETRHPIRLYSRYIDKVHIMFKFTHEEARDLIQRHLTERPDPNNENMVGYNNKKCWPRDARMRLMKHDVNLGRSVFWDMKNRLPRSITTLEWENGFVSVYSKDNPNLLFSMCGFEVRVLPKIRMGQEAFSSTRDGVWNLQNEQTKERTAVAFLRADDEHMKVFENRVRQILMSSGSTTFTKIVNKWNTALIGLMTYFREATVHTQELLDLLVKCENKIQTRVKIGLNSKMPSRFPPVIFYTPKEIGGLGMLSMGHILIPQSDLRYSNQTDVGVSHFRSGMSHEEDQLIPNLYRYIQPWESEFIDSQRVWAEYALKRQEAQAQNRRLTLEDLEDSWDRGIPRINTLFQKDRHTLAYDKGWRVRTDFKQYQALKQNPFWWTHQRHDGKLWNLNNYRTDVIQALGGVEGILEHTLFKGTYFPTWEGLFWEKASGFEESMKYKKLTNAQRSGLNQIPNRRFTLWWSPTINRANVYVGFQVQLDLTGIYMHGKIPTLKISLIQIFRAHLWQKIHESVVMDLCQVLDQELEPLEIETVQKETIHPRKSYKMNSSCADVLLFAAHKWPMSKPSLIAESKDVFDQKASNKYWIDVQLRWGDYDSHDIERYTKAKFMDYTTDNMSIYPSPTGVIIGLDLAYNLHSAFGNWFPGSKPLLAQAMNKIMKSNPALYVLRERIRKGLQLYSSEPTEPYLSSQNYGEIFSNQIIWFVDDTNVYRVTIHKTFEGNLTTKPINGVIFIFNPRTGQLFLKIIHTSVWAGQKRLGQLAKWKTAEEVAALVRSLPVEEQPKQVIVTRKGMLDPLEVHLLDFPNIVIKGSELQLPFQACLKIEKFGDLILKATEPQMALFNIYDDWLMTVSSYTAFQRLILILRALHVNNEKAKMLLKPDMSVVTEPNHIWPSLTDDQWMKVEVALRDLILSDYAKKNKVNTSALTQSEIRDIILGAEITPPSQQRQQIAEIEKQAKEASQLTAVTTRTTNVHGDELISTTISPYEQSAFGSKTDWRVRAISATNLYLRVNHIYVNSDDIKETGYTYIMPKNILKKFICIADLRTQIAGYLYGISPPDNPQVKEIRCVVMVPQCGNHQQVQLPSSLPEHQFLDDLEPLGWIHTQPNELPQLSPQDVTFHTRVLENNKQWDAEKCIILTCSFTPGSCSLTSYKLTQAGYEWGRLNKDTGSNPHGYLPTHYEKVQMLLSDRFFGFYMVPENGPWNYNFMGANHTVSINYSLTLGTPKEYYHQVHRPTHFLQFSKMEEDGDLDRDDSFA</sequence>
<proteinExistence type="inferred from homology"/>
<protein>
    <recommendedName>
        <fullName evidence="4">Pre-mRNA-processing-splicing factor 8B</fullName>
    </recommendedName>
    <alternativeName>
        <fullName evidence="4">PRP8 homolog B</fullName>
        <shortName evidence="4">AtPRP8B</shortName>
    </alternativeName>
</protein>
<dbReference type="EMBL" id="AL035656">
    <property type="protein sequence ID" value="CAB38612.1"/>
    <property type="status" value="ALT_SEQ"/>
    <property type="molecule type" value="Genomic_DNA"/>
</dbReference>
<dbReference type="EMBL" id="AL161594">
    <property type="protein sequence ID" value="CAB80541.1"/>
    <property type="status" value="ALT_SEQ"/>
    <property type="molecule type" value="Genomic_DNA"/>
</dbReference>
<dbReference type="EMBL" id="CP002687">
    <property type="protein sequence ID" value="AEE86973.1"/>
    <property type="status" value="ALT_SEQ"/>
    <property type="molecule type" value="Genomic_DNA"/>
</dbReference>
<dbReference type="PIR" id="T06077">
    <property type="entry name" value="T06077"/>
</dbReference>
<dbReference type="RefSeq" id="NP_195589.2">
    <property type="nucleotide sequence ID" value="NM_120038.5"/>
</dbReference>
<dbReference type="SMR" id="Q9T0I6"/>
<dbReference type="FunCoup" id="Q9T0I6">
    <property type="interactions" value="4372"/>
</dbReference>
<dbReference type="IntAct" id="Q9T0I6">
    <property type="interactions" value="2"/>
</dbReference>
<dbReference type="STRING" id="3702.Q9T0I6"/>
<dbReference type="GlyGen" id="Q9T0I6">
    <property type="glycosylation" value="1 site"/>
</dbReference>
<dbReference type="PaxDb" id="3702-AT4G38780.1"/>
<dbReference type="PeptideAtlas" id="Q9T0I6"/>
<dbReference type="ProteomicsDB" id="226380"/>
<dbReference type="GeneID" id="830033"/>
<dbReference type="KEGG" id="ath:AT4G38780"/>
<dbReference type="Araport" id="AT4G38780"/>
<dbReference type="TAIR" id="AT4G38780"/>
<dbReference type="eggNOG" id="KOG1795">
    <property type="taxonomic scope" value="Eukaryota"/>
</dbReference>
<dbReference type="InParanoid" id="Q9T0I6"/>
<dbReference type="PRO" id="PR:Q9T0I6"/>
<dbReference type="Proteomes" id="UP000006548">
    <property type="component" value="Chromosome 4"/>
</dbReference>
<dbReference type="ExpressionAtlas" id="Q9T0I6">
    <property type="expression patterns" value="baseline and differential"/>
</dbReference>
<dbReference type="GO" id="GO:0071013">
    <property type="term" value="C:catalytic step 2 spliceosome"/>
    <property type="evidence" value="ECO:0000318"/>
    <property type="project" value="GO_Central"/>
</dbReference>
<dbReference type="GO" id="GO:0005829">
    <property type="term" value="C:cytosol"/>
    <property type="evidence" value="ECO:0007005"/>
    <property type="project" value="TAIR"/>
</dbReference>
<dbReference type="GO" id="GO:0005886">
    <property type="term" value="C:plasma membrane"/>
    <property type="evidence" value="ECO:0007005"/>
    <property type="project" value="TAIR"/>
</dbReference>
<dbReference type="GO" id="GO:0009506">
    <property type="term" value="C:plasmodesma"/>
    <property type="evidence" value="ECO:0007005"/>
    <property type="project" value="TAIR"/>
</dbReference>
<dbReference type="GO" id="GO:0005682">
    <property type="term" value="C:U5 snRNP"/>
    <property type="evidence" value="ECO:0000318"/>
    <property type="project" value="GO_Central"/>
</dbReference>
<dbReference type="GO" id="GO:0008237">
    <property type="term" value="F:metallopeptidase activity"/>
    <property type="evidence" value="ECO:0007669"/>
    <property type="project" value="InterPro"/>
</dbReference>
<dbReference type="GO" id="GO:0003729">
    <property type="term" value="F:mRNA binding"/>
    <property type="evidence" value="ECO:0007005"/>
    <property type="project" value="TAIR"/>
</dbReference>
<dbReference type="GO" id="GO:0097157">
    <property type="term" value="F:pre-mRNA intronic binding"/>
    <property type="evidence" value="ECO:0000318"/>
    <property type="project" value="GO_Central"/>
</dbReference>
<dbReference type="GO" id="GO:0030619">
    <property type="term" value="F:U1 snRNA binding"/>
    <property type="evidence" value="ECO:0000318"/>
    <property type="project" value="GO_Central"/>
</dbReference>
<dbReference type="GO" id="GO:0030620">
    <property type="term" value="F:U2 snRNA binding"/>
    <property type="evidence" value="ECO:0000318"/>
    <property type="project" value="GO_Central"/>
</dbReference>
<dbReference type="GO" id="GO:0030623">
    <property type="term" value="F:U5 snRNA binding"/>
    <property type="evidence" value="ECO:0000318"/>
    <property type="project" value="GO_Central"/>
</dbReference>
<dbReference type="GO" id="GO:0017070">
    <property type="term" value="F:U6 snRNA binding"/>
    <property type="evidence" value="ECO:0000318"/>
    <property type="project" value="GO_Central"/>
</dbReference>
<dbReference type="GO" id="GO:0000244">
    <property type="term" value="P:spliceosomal tri-snRNP complex assembly"/>
    <property type="evidence" value="ECO:0000318"/>
    <property type="project" value="GO_Central"/>
</dbReference>
<dbReference type="CDD" id="cd08056">
    <property type="entry name" value="MPN_PRP8"/>
    <property type="match status" value="1"/>
</dbReference>
<dbReference type="CDD" id="cd13838">
    <property type="entry name" value="RNase_H_like_Prp8_IV"/>
    <property type="match status" value="1"/>
</dbReference>
<dbReference type="FunFam" id="1.20.80.40:FF:000001">
    <property type="entry name" value="Pre-mRNA-processing-splicing factor 8"/>
    <property type="match status" value="1"/>
</dbReference>
<dbReference type="FunFam" id="3.30.420.230:FF:000003">
    <property type="entry name" value="Pre-mRNA-processing-splicing factor 8"/>
    <property type="match status" value="1"/>
</dbReference>
<dbReference type="FunFam" id="3.30.43.40:FF:000001">
    <property type="entry name" value="Pre-mRNA-processing-splicing factor 8"/>
    <property type="match status" value="1"/>
</dbReference>
<dbReference type="FunFam" id="3.40.140.10:FF:000002">
    <property type="entry name" value="Pre-mRNA-processing-splicing factor 8"/>
    <property type="match status" value="1"/>
</dbReference>
<dbReference type="FunFam" id="3.90.1570.40:FF:000001">
    <property type="entry name" value="Pre-mRNA-processing-splicing factor 8"/>
    <property type="match status" value="1"/>
</dbReference>
<dbReference type="Gene3D" id="1.20.80.40">
    <property type="match status" value="1"/>
</dbReference>
<dbReference type="Gene3D" id="3.30.420.230">
    <property type="match status" value="1"/>
</dbReference>
<dbReference type="Gene3D" id="3.90.1570.40">
    <property type="match status" value="1"/>
</dbReference>
<dbReference type="Gene3D" id="3.40.140.10">
    <property type="entry name" value="Cytidine Deaminase, domain 2"/>
    <property type="match status" value="1"/>
</dbReference>
<dbReference type="Gene3D" id="3.30.43.40">
    <property type="entry name" value="Pre-mRNA-processing-splicing factor 8, U5-snRNA-binding domain"/>
    <property type="match status" value="1"/>
</dbReference>
<dbReference type="InterPro" id="IPR000555">
    <property type="entry name" value="JAMM/MPN+_dom"/>
</dbReference>
<dbReference type="InterPro" id="IPR037518">
    <property type="entry name" value="MPN"/>
</dbReference>
<dbReference type="InterPro" id="IPR012591">
    <property type="entry name" value="PRO8NT"/>
</dbReference>
<dbReference type="InterPro" id="IPR012592">
    <property type="entry name" value="PROCN"/>
</dbReference>
<dbReference type="InterPro" id="IPR012984">
    <property type="entry name" value="PROCT"/>
</dbReference>
<dbReference type="InterPro" id="IPR027652">
    <property type="entry name" value="PRP8"/>
</dbReference>
<dbReference type="InterPro" id="IPR021983">
    <property type="entry name" value="PRP8_domainIV"/>
</dbReference>
<dbReference type="InterPro" id="IPR043173">
    <property type="entry name" value="Prp8_domainIV_fingers"/>
</dbReference>
<dbReference type="InterPro" id="IPR043172">
    <property type="entry name" value="Prp8_domainIV_palm"/>
</dbReference>
<dbReference type="InterPro" id="IPR019581">
    <property type="entry name" value="Prp8_U5-snRNA-bd"/>
</dbReference>
<dbReference type="InterPro" id="IPR042516">
    <property type="entry name" value="Prp8_U5-snRNA-bd_sf"/>
</dbReference>
<dbReference type="InterPro" id="IPR019580">
    <property type="entry name" value="Prp8_U6-snRNA-bd"/>
</dbReference>
<dbReference type="InterPro" id="IPR012337">
    <property type="entry name" value="RNaseH-like_sf"/>
</dbReference>
<dbReference type="InterPro" id="IPR019582">
    <property type="entry name" value="RRM_spliceosomal_PrP8"/>
</dbReference>
<dbReference type="PANTHER" id="PTHR11140">
    <property type="entry name" value="PRE-MRNA SPLICING FACTOR PRP8"/>
    <property type="match status" value="1"/>
</dbReference>
<dbReference type="PANTHER" id="PTHR11140:SF0">
    <property type="entry name" value="PRE-MRNA-PROCESSING-SPLICING FACTOR 8"/>
    <property type="match status" value="1"/>
</dbReference>
<dbReference type="Pfam" id="PF01398">
    <property type="entry name" value="JAB"/>
    <property type="match status" value="1"/>
</dbReference>
<dbReference type="Pfam" id="PF08082">
    <property type="entry name" value="PRO8NT"/>
    <property type="match status" value="1"/>
</dbReference>
<dbReference type="Pfam" id="PF08083">
    <property type="entry name" value="PROCN"/>
    <property type="match status" value="1"/>
</dbReference>
<dbReference type="Pfam" id="PF08084">
    <property type="entry name" value="PROCT"/>
    <property type="match status" value="1"/>
</dbReference>
<dbReference type="Pfam" id="PF12134">
    <property type="entry name" value="PRP8_domainIV"/>
    <property type="match status" value="1"/>
</dbReference>
<dbReference type="Pfam" id="PF10598">
    <property type="entry name" value="RRM_4"/>
    <property type="match status" value="1"/>
</dbReference>
<dbReference type="Pfam" id="PF10597">
    <property type="entry name" value="U5_2-snRNA_bdg"/>
    <property type="match status" value="1"/>
</dbReference>
<dbReference type="Pfam" id="PF10596">
    <property type="entry name" value="U6-snRNA_bdg"/>
    <property type="match status" value="1"/>
</dbReference>
<dbReference type="SMART" id="SM00232">
    <property type="entry name" value="JAB_MPN"/>
    <property type="match status" value="1"/>
</dbReference>
<dbReference type="SUPFAM" id="SSF53098">
    <property type="entry name" value="Ribonuclease H-like"/>
    <property type="match status" value="2"/>
</dbReference>
<dbReference type="PROSITE" id="PS50249">
    <property type="entry name" value="MPN"/>
    <property type="match status" value="1"/>
</dbReference>
<comment type="function">
    <text evidence="1">Functions as a scaffold that mediates the ordered assembly of spliceosomal proteins and snRNAs. Required for the assembly of the U4/U6-U5 tri-snRNP complex.</text>
</comment>
<comment type="subcellular location">
    <subcellularLocation>
        <location evidence="4">Nucleus</location>
    </subcellularLocation>
</comment>
<comment type="sequence caution" evidence="4">
    <conflict type="erroneous gene model prediction">
        <sequence resource="EMBL-CDS" id="AEE86973"/>
    </conflict>
</comment>
<comment type="sequence caution" evidence="4">
    <conflict type="erroneous gene model prediction">
        <sequence resource="EMBL-CDS" id="CAB38612"/>
    </conflict>
</comment>
<comment type="sequence caution" evidence="4">
    <conflict type="erroneous gene model prediction">
        <sequence resource="EMBL-CDS" id="CAB80541"/>
    </conflict>
</comment>
<accession>Q9T0I6</accession>
<accession>F4JUG5</accession>
<gene>
    <name evidence="4" type="primary">PRP8B</name>
    <name evidence="5" type="ordered locus">At4g38780</name>
</gene>
<feature type="chain" id="PRO_0000436564" description="Pre-mRNA-processing-splicing factor 8B">
    <location>
        <begin position="1"/>
        <end position="2359"/>
    </location>
</feature>
<feature type="domain" description="MPN" evidence="2">
    <location>
        <begin position="2129"/>
        <end position="2260"/>
    </location>
</feature>
<feature type="region of interest" description="Disordered" evidence="3">
    <location>
        <begin position="1"/>
        <end position="50"/>
    </location>
</feature>
<feature type="compositionally biased region" description="Polar residues" evidence="3">
    <location>
        <begin position="32"/>
        <end position="41"/>
    </location>
</feature>
<evidence type="ECO:0000250" key="1">
    <source>
        <dbReference type="UniProtKB" id="Q6P2Q9"/>
    </source>
</evidence>
<evidence type="ECO:0000255" key="2">
    <source>
        <dbReference type="PROSITE-ProRule" id="PRU01182"/>
    </source>
</evidence>
<evidence type="ECO:0000256" key="3">
    <source>
        <dbReference type="SAM" id="MobiDB-lite"/>
    </source>
</evidence>
<evidence type="ECO:0000305" key="4"/>
<evidence type="ECO:0000312" key="5">
    <source>
        <dbReference type="Araport" id="AT4G38780"/>
    </source>
</evidence>